<proteinExistence type="inferred from homology"/>
<sequence>MQQRRPVRRALLSVSDKAGIVEFAQALSARGVELLSTGGTARLLAEKGLPVTEVSDYTGFPEMMDGRVKTLHPKVHGGILGRRGQDDAIMEEHQIQPIDMVVVNLYPFAQTVAREGCSLEDAVENIDIGGPTMVRSAAKNHKDVAIVVKSSDYDAIIKEMDDNEGSLTLATRFDLAIKAFEHTAAYDSMIANYFGSMVPAYHGESKEAAGRFPRTLNLNFIKKQDMRYGENSHQQAAFYIEENVKEASVATATQVQGKALSYNNIADTDAALECVKEFAEPACVIVKHANPCGVAIGNSILDAYDRAYKTDPTSAFGGIIAFNRELDAETAQAIISRQFVEVIIAPSASEEALKITAAKQNVRVLTCGQWGERVPGLDFKRVNGGLLVQDRDLGMVGAEELRVVTKRQPTEQELRDALFCWKVAKFVKSNAIVYAKNNMTIGIGAGQMSRVYSAKIAGIKAADEGLEVKGSSMASDAFFPFRDGIDAAAAAGVTCVIQPGGSIRDDEVIAAADEHGIAMLFTDMRHFRH</sequence>
<evidence type="ECO:0000255" key="1">
    <source>
        <dbReference type="HAMAP-Rule" id="MF_00139"/>
    </source>
</evidence>
<evidence type="ECO:0000255" key="2">
    <source>
        <dbReference type="PROSITE-ProRule" id="PRU01202"/>
    </source>
</evidence>
<name>PUR9_ECO5E</name>
<gene>
    <name evidence="1" type="primary">purH</name>
    <name type="ordered locus">ECH74115_5476</name>
</gene>
<protein>
    <recommendedName>
        <fullName evidence="1">Bifunctional purine biosynthesis protein PurH</fullName>
    </recommendedName>
    <domain>
        <recommendedName>
            <fullName evidence="1">Phosphoribosylaminoimidazolecarboxamide formyltransferase</fullName>
            <ecNumber evidence="1">2.1.2.3</ecNumber>
        </recommendedName>
        <alternativeName>
            <fullName evidence="1">AICAR transformylase</fullName>
        </alternativeName>
    </domain>
    <domain>
        <recommendedName>
            <fullName evidence="1">IMP cyclohydrolase</fullName>
            <ecNumber evidence="1">3.5.4.10</ecNumber>
        </recommendedName>
        <alternativeName>
            <fullName evidence="1">ATIC</fullName>
        </alternativeName>
        <alternativeName>
            <fullName evidence="1">IMP synthase</fullName>
        </alternativeName>
        <alternativeName>
            <fullName evidence="1">Inosinicase</fullName>
        </alternativeName>
    </domain>
</protein>
<organism>
    <name type="scientific">Escherichia coli O157:H7 (strain EC4115 / EHEC)</name>
    <dbReference type="NCBI Taxonomy" id="444450"/>
    <lineage>
        <taxon>Bacteria</taxon>
        <taxon>Pseudomonadati</taxon>
        <taxon>Pseudomonadota</taxon>
        <taxon>Gammaproteobacteria</taxon>
        <taxon>Enterobacterales</taxon>
        <taxon>Enterobacteriaceae</taxon>
        <taxon>Escherichia</taxon>
    </lineage>
</organism>
<keyword id="KW-0007">Acetylation</keyword>
<keyword id="KW-0378">Hydrolase</keyword>
<keyword id="KW-0511">Multifunctional enzyme</keyword>
<keyword id="KW-0658">Purine biosynthesis</keyword>
<keyword id="KW-0808">Transferase</keyword>
<comment type="catalytic activity">
    <reaction evidence="1">
        <text>(6R)-10-formyltetrahydrofolate + 5-amino-1-(5-phospho-beta-D-ribosyl)imidazole-4-carboxamide = 5-formamido-1-(5-phospho-D-ribosyl)imidazole-4-carboxamide + (6S)-5,6,7,8-tetrahydrofolate</text>
        <dbReference type="Rhea" id="RHEA:22192"/>
        <dbReference type="ChEBI" id="CHEBI:57453"/>
        <dbReference type="ChEBI" id="CHEBI:58467"/>
        <dbReference type="ChEBI" id="CHEBI:58475"/>
        <dbReference type="ChEBI" id="CHEBI:195366"/>
        <dbReference type="EC" id="2.1.2.3"/>
    </reaction>
</comment>
<comment type="catalytic activity">
    <reaction evidence="1">
        <text>IMP + H2O = 5-formamido-1-(5-phospho-D-ribosyl)imidazole-4-carboxamide</text>
        <dbReference type="Rhea" id="RHEA:18445"/>
        <dbReference type="ChEBI" id="CHEBI:15377"/>
        <dbReference type="ChEBI" id="CHEBI:58053"/>
        <dbReference type="ChEBI" id="CHEBI:58467"/>
        <dbReference type="EC" id="3.5.4.10"/>
    </reaction>
</comment>
<comment type="pathway">
    <text evidence="1">Purine metabolism; IMP biosynthesis via de novo pathway; 5-formamido-1-(5-phospho-D-ribosyl)imidazole-4-carboxamide from 5-amino-1-(5-phospho-D-ribosyl)imidazole-4-carboxamide (10-formyl THF route): step 1/1.</text>
</comment>
<comment type="pathway">
    <text evidence="1">Purine metabolism; IMP biosynthesis via de novo pathway; IMP from 5-formamido-1-(5-phospho-D-ribosyl)imidazole-4-carboxamide: step 1/1.</text>
</comment>
<comment type="domain">
    <text evidence="1">The IMP cyclohydrolase activity resides in the N-terminal region.</text>
</comment>
<comment type="similarity">
    <text evidence="1">Belongs to the PurH family.</text>
</comment>
<reference key="1">
    <citation type="journal article" date="2011" name="Proc. Natl. Acad. Sci. U.S.A.">
        <title>Genomic anatomy of Escherichia coli O157:H7 outbreaks.</title>
        <authorList>
            <person name="Eppinger M."/>
            <person name="Mammel M.K."/>
            <person name="Leclerc J.E."/>
            <person name="Ravel J."/>
            <person name="Cebula T.A."/>
        </authorList>
    </citation>
    <scope>NUCLEOTIDE SEQUENCE [LARGE SCALE GENOMIC DNA]</scope>
    <source>
        <strain>EC4115 / EHEC</strain>
    </source>
</reference>
<feature type="chain" id="PRO_1000096060" description="Bifunctional purine biosynthesis protein PurH">
    <location>
        <begin position="1"/>
        <end position="529"/>
    </location>
</feature>
<feature type="domain" description="MGS-like" evidence="2">
    <location>
        <begin position="1"/>
        <end position="148"/>
    </location>
</feature>
<feature type="modified residue" description="N6-acetyllysine" evidence="1">
    <location>
        <position position="287"/>
    </location>
</feature>
<dbReference type="EC" id="2.1.2.3" evidence="1"/>
<dbReference type="EC" id="3.5.4.10" evidence="1"/>
<dbReference type="EMBL" id="CP001164">
    <property type="protein sequence ID" value="ACI37763.1"/>
    <property type="molecule type" value="Genomic_DNA"/>
</dbReference>
<dbReference type="RefSeq" id="WP_001187564.1">
    <property type="nucleotide sequence ID" value="NC_011353.1"/>
</dbReference>
<dbReference type="SMR" id="B5Z0A3"/>
<dbReference type="GeneID" id="75169452"/>
<dbReference type="KEGG" id="ecf:ECH74115_5476"/>
<dbReference type="HOGENOM" id="CLU_016316_5_2_6"/>
<dbReference type="UniPathway" id="UPA00074">
    <property type="reaction ID" value="UER00133"/>
</dbReference>
<dbReference type="UniPathway" id="UPA00074">
    <property type="reaction ID" value="UER00135"/>
</dbReference>
<dbReference type="GO" id="GO:0005829">
    <property type="term" value="C:cytosol"/>
    <property type="evidence" value="ECO:0007669"/>
    <property type="project" value="TreeGrafter"/>
</dbReference>
<dbReference type="GO" id="GO:0003937">
    <property type="term" value="F:IMP cyclohydrolase activity"/>
    <property type="evidence" value="ECO:0007669"/>
    <property type="project" value="UniProtKB-UniRule"/>
</dbReference>
<dbReference type="GO" id="GO:0004643">
    <property type="term" value="F:phosphoribosylaminoimidazolecarboxamide formyltransferase activity"/>
    <property type="evidence" value="ECO:0007669"/>
    <property type="project" value="UniProtKB-UniRule"/>
</dbReference>
<dbReference type="GO" id="GO:0006189">
    <property type="term" value="P:'de novo' IMP biosynthetic process"/>
    <property type="evidence" value="ECO:0007669"/>
    <property type="project" value="UniProtKB-UniRule"/>
</dbReference>
<dbReference type="CDD" id="cd01421">
    <property type="entry name" value="IMPCH"/>
    <property type="match status" value="1"/>
</dbReference>
<dbReference type="FunFam" id="3.40.140.20:FF:000001">
    <property type="entry name" value="Bifunctional purine biosynthesis protein PurH"/>
    <property type="match status" value="1"/>
</dbReference>
<dbReference type="FunFam" id="3.40.140.20:FF:000002">
    <property type="entry name" value="Bifunctional purine biosynthesis protein PurH"/>
    <property type="match status" value="1"/>
</dbReference>
<dbReference type="FunFam" id="3.40.50.1380:FF:000001">
    <property type="entry name" value="Bifunctional purine biosynthesis protein PurH"/>
    <property type="match status" value="1"/>
</dbReference>
<dbReference type="Gene3D" id="3.40.140.20">
    <property type="match status" value="2"/>
</dbReference>
<dbReference type="Gene3D" id="3.40.50.1380">
    <property type="entry name" value="Methylglyoxal synthase-like domain"/>
    <property type="match status" value="1"/>
</dbReference>
<dbReference type="HAMAP" id="MF_00139">
    <property type="entry name" value="PurH"/>
    <property type="match status" value="1"/>
</dbReference>
<dbReference type="InterPro" id="IPR024051">
    <property type="entry name" value="AICAR_Tfase_dup_dom_sf"/>
</dbReference>
<dbReference type="InterPro" id="IPR016193">
    <property type="entry name" value="Cytidine_deaminase-like"/>
</dbReference>
<dbReference type="InterPro" id="IPR011607">
    <property type="entry name" value="MGS-like_dom"/>
</dbReference>
<dbReference type="InterPro" id="IPR036914">
    <property type="entry name" value="MGS-like_dom_sf"/>
</dbReference>
<dbReference type="InterPro" id="IPR002695">
    <property type="entry name" value="PurH-like"/>
</dbReference>
<dbReference type="NCBIfam" id="NF002049">
    <property type="entry name" value="PRK00881.1"/>
    <property type="match status" value="1"/>
</dbReference>
<dbReference type="NCBIfam" id="TIGR00355">
    <property type="entry name" value="purH"/>
    <property type="match status" value="1"/>
</dbReference>
<dbReference type="PANTHER" id="PTHR11692:SF0">
    <property type="entry name" value="BIFUNCTIONAL PURINE BIOSYNTHESIS PROTEIN ATIC"/>
    <property type="match status" value="1"/>
</dbReference>
<dbReference type="PANTHER" id="PTHR11692">
    <property type="entry name" value="BIFUNCTIONAL PURINE BIOSYNTHESIS PROTEIN PURH"/>
    <property type="match status" value="1"/>
</dbReference>
<dbReference type="Pfam" id="PF01808">
    <property type="entry name" value="AICARFT_IMPCHas"/>
    <property type="match status" value="1"/>
</dbReference>
<dbReference type="Pfam" id="PF02142">
    <property type="entry name" value="MGS"/>
    <property type="match status" value="1"/>
</dbReference>
<dbReference type="PIRSF" id="PIRSF000414">
    <property type="entry name" value="AICARFT_IMPCHas"/>
    <property type="match status" value="1"/>
</dbReference>
<dbReference type="SMART" id="SM00798">
    <property type="entry name" value="AICARFT_IMPCHas"/>
    <property type="match status" value="1"/>
</dbReference>
<dbReference type="SMART" id="SM00851">
    <property type="entry name" value="MGS"/>
    <property type="match status" value="1"/>
</dbReference>
<dbReference type="SUPFAM" id="SSF53927">
    <property type="entry name" value="Cytidine deaminase-like"/>
    <property type="match status" value="1"/>
</dbReference>
<dbReference type="SUPFAM" id="SSF52335">
    <property type="entry name" value="Methylglyoxal synthase-like"/>
    <property type="match status" value="1"/>
</dbReference>
<dbReference type="PROSITE" id="PS51855">
    <property type="entry name" value="MGS"/>
    <property type="match status" value="1"/>
</dbReference>
<accession>B5Z0A3</accession>